<evidence type="ECO:0000256" key="1">
    <source>
        <dbReference type="SAM" id="MobiDB-lite"/>
    </source>
</evidence>
<evidence type="ECO:0000269" key="2">
    <source>
    </source>
</evidence>
<evidence type="ECO:0000269" key="3">
    <source>
    </source>
</evidence>
<evidence type="ECO:0000269" key="4">
    <source>
    </source>
</evidence>
<evidence type="ECO:0000269" key="5">
    <source>
    </source>
</evidence>
<evidence type="ECO:0000269" key="6">
    <source>
    </source>
</evidence>
<evidence type="ECO:0000269" key="7">
    <source>
    </source>
</evidence>
<evidence type="ECO:0000305" key="8"/>
<evidence type="ECO:0000305" key="9">
    <source>
    </source>
</evidence>
<evidence type="ECO:0007744" key="10">
    <source>
    </source>
</evidence>
<evidence type="ECO:0007744" key="11">
    <source>
    </source>
</evidence>
<protein>
    <recommendedName>
        <fullName>Transcriptional activator POG1</fullName>
    </recommendedName>
    <alternativeName>
        <fullName>Promoter of growth protein 1</fullName>
    </alternativeName>
</protein>
<accession>P40473</accession>
<accession>D6VVG5</accession>
<gene>
    <name type="primary">POG1</name>
    <name type="ordered locus">YIL122W</name>
</gene>
<keyword id="KW-0010">Activator</keyword>
<keyword id="KW-0131">Cell cycle</keyword>
<keyword id="KW-0132">Cell division</keyword>
<keyword id="KW-0498">Mitosis</keyword>
<keyword id="KW-0539">Nucleus</keyword>
<keyword id="KW-0597">Phosphoprotein</keyword>
<keyword id="KW-1185">Reference proteome</keyword>
<keyword id="KW-0346">Stress response</keyword>
<keyword id="KW-0804">Transcription</keyword>
<keyword id="KW-0805">Transcription regulation</keyword>
<proteinExistence type="evidence at protein level"/>
<feature type="chain" id="PRO_0000202962" description="Transcriptional activator POG1">
    <location>
        <begin position="1"/>
        <end position="351"/>
    </location>
</feature>
<feature type="region of interest" description="Disordered" evidence="1">
    <location>
        <begin position="1"/>
        <end position="56"/>
    </location>
</feature>
<feature type="region of interest" description="Disordered" evidence="1">
    <location>
        <begin position="234"/>
        <end position="256"/>
    </location>
</feature>
<feature type="region of interest" description="Disordered" evidence="1">
    <location>
        <begin position="291"/>
        <end position="351"/>
    </location>
</feature>
<feature type="compositionally biased region" description="Basic and acidic residues" evidence="1">
    <location>
        <begin position="1"/>
        <end position="26"/>
    </location>
</feature>
<feature type="compositionally biased region" description="Polar residues" evidence="1">
    <location>
        <begin position="27"/>
        <end position="56"/>
    </location>
</feature>
<feature type="compositionally biased region" description="Polar residues" evidence="1">
    <location>
        <begin position="241"/>
        <end position="256"/>
    </location>
</feature>
<feature type="modified residue" description="Phosphoserine" evidence="10">
    <location>
        <position position="152"/>
    </location>
</feature>
<feature type="modified residue" description="Phosphoserine" evidence="11">
    <location>
        <position position="168"/>
    </location>
</feature>
<feature type="modified residue" description="Phosphoserine" evidence="11">
    <location>
        <position position="314"/>
    </location>
</feature>
<organism>
    <name type="scientific">Saccharomyces cerevisiae (strain ATCC 204508 / S288c)</name>
    <name type="common">Baker's yeast</name>
    <dbReference type="NCBI Taxonomy" id="559292"/>
    <lineage>
        <taxon>Eukaryota</taxon>
        <taxon>Fungi</taxon>
        <taxon>Dikarya</taxon>
        <taxon>Ascomycota</taxon>
        <taxon>Saccharomycotina</taxon>
        <taxon>Saccharomycetes</taxon>
        <taxon>Saccharomycetales</taxon>
        <taxon>Saccharomycetaceae</taxon>
        <taxon>Saccharomyces</taxon>
    </lineage>
</organism>
<sequence>MKQEPHRQSEEKEKPKGPMAVEREQHTSLSSGTTVTASTGDESTNSRPVESSQTEKSLSLRIRILKQLGFDDIQELNACDTGLVEQFLNVRLINDTKELEKIRESNLAKLNQIIDKCMESDKISDSTLNKILDMSMNRDTNNDNNNHLTIPSPITTKKRKINASELASPRGHRRYRSDIPTVSEVETGVGYPQIHQQPGAYTLPMPANQWMSNPYMQPPQPQVQQIMPQYLYPPGMGPQAQLPTMSSNSESQTPVMSSQFLSLNQHGLYQQNIGAHPVMSMGPQANIYGQQHQLQPGQERDQSRKSFSHRRSQSANISMANFRSPMRNPQPASSQRPVNFLIHTPKHPPPT</sequence>
<name>POG1_YEAST</name>
<comment type="function">
    <text evidence="2 6 7">Transcriptional activator which promotes cell cycle recovery with CLN2, after pheromone induced G1 arrest, probably inhibiting the ability of STE20 to activate the pheromone response pathway. Binds the promoters of genes that function in cell cycle regulation, cytoskeletal organization, and spindle assembly. May also be involved in stress-resistance.</text>
</comment>
<comment type="subcellular location">
    <subcellularLocation>
        <location evidence="3">Nucleus</location>
    </subcellularLocation>
</comment>
<comment type="induction">
    <text evidence="2 5">Expressed periodically during cell division. Regulated by the SBF complex which is one critical regulator of the start of the cell cycle.</text>
</comment>
<comment type="PTM">
    <text evidence="9">Phosphorylated by CDC28.</text>
</comment>
<comment type="miscellaneous">
    <text evidence="4">Present with 736 molecules/cell in log phase SD medium.</text>
</comment>
<comment type="similarity">
    <text evidence="8">Belongs to the POG1 family.</text>
</comment>
<reference key="1">
    <citation type="journal article" date="1997" name="Nature">
        <title>The nucleotide sequence of Saccharomyces cerevisiae chromosome IX.</title>
        <authorList>
            <person name="Churcher C.M."/>
            <person name="Bowman S."/>
            <person name="Badcock K."/>
            <person name="Bankier A.T."/>
            <person name="Brown D."/>
            <person name="Chillingworth T."/>
            <person name="Connor R."/>
            <person name="Devlin K."/>
            <person name="Gentles S."/>
            <person name="Hamlin N."/>
            <person name="Harris D.E."/>
            <person name="Horsnell T."/>
            <person name="Hunt S."/>
            <person name="Jagels K."/>
            <person name="Jones M."/>
            <person name="Lye G."/>
            <person name="Moule S."/>
            <person name="Odell C."/>
            <person name="Pearson D."/>
            <person name="Rajandream M.A."/>
            <person name="Rice P."/>
            <person name="Rowley N."/>
            <person name="Skelton J."/>
            <person name="Smith V."/>
            <person name="Walsh S.V."/>
            <person name="Whitehead S."/>
            <person name="Barrell B.G."/>
        </authorList>
    </citation>
    <scope>NUCLEOTIDE SEQUENCE [LARGE SCALE GENOMIC DNA]</scope>
    <source>
        <strain>ATCC 204508 / S288c</strain>
    </source>
</reference>
<reference key="2">
    <citation type="journal article" date="2014" name="G3 (Bethesda)">
        <title>The reference genome sequence of Saccharomyces cerevisiae: Then and now.</title>
        <authorList>
            <person name="Engel S.R."/>
            <person name="Dietrich F.S."/>
            <person name="Fisk D.G."/>
            <person name="Binkley G."/>
            <person name="Balakrishnan R."/>
            <person name="Costanzo M.C."/>
            <person name="Dwight S.S."/>
            <person name="Hitz B.C."/>
            <person name="Karra K."/>
            <person name="Nash R.S."/>
            <person name="Weng S."/>
            <person name="Wong E.D."/>
            <person name="Lloyd P."/>
            <person name="Skrzypek M.S."/>
            <person name="Miyasato S.R."/>
            <person name="Simison M."/>
            <person name="Cherry J.M."/>
        </authorList>
    </citation>
    <scope>GENOME REANNOTATION</scope>
    <source>
        <strain>ATCC 204508 / S288c</strain>
    </source>
</reference>
<reference key="3">
    <citation type="journal article" date="1999" name="Genetics">
        <title>POG1, a novel yeast gene, promotes recovery from pheromone arrest via the G1 cyclin CLN2.</title>
        <authorList>
            <person name="Leza M.A."/>
            <person name="Elion E.A."/>
        </authorList>
    </citation>
    <scope>FUNCTION</scope>
</reference>
<reference key="4">
    <citation type="journal article" date="2002" name="Genes Dev.">
        <title>Complex transcriptional circuitry at the G1/S transition in Saccharomyces cerevisiae.</title>
        <authorList>
            <person name="Horak C.E."/>
            <person name="Luscombe N.M."/>
            <person name="Qian J."/>
            <person name="Bertone P."/>
            <person name="Piccirrillo S."/>
            <person name="Gerstein M."/>
            <person name="Snyder M."/>
        </authorList>
    </citation>
    <scope>FUNCTION</scope>
    <scope>INDUCTION</scope>
</reference>
<reference key="5">
    <citation type="journal article" date="2003" name="Nature">
        <title>Global analysis of protein localization in budding yeast.</title>
        <authorList>
            <person name="Huh W.-K."/>
            <person name="Falvo J.V."/>
            <person name="Gerke L.C."/>
            <person name="Carroll A.S."/>
            <person name="Howson R.W."/>
            <person name="Weissman J.S."/>
            <person name="O'Shea E.K."/>
        </authorList>
    </citation>
    <scope>SUBCELLULAR LOCATION [LARGE SCALE ANALYSIS]</scope>
</reference>
<reference key="6">
    <citation type="journal article" date="2003" name="Nature">
        <title>Global analysis of protein expression in yeast.</title>
        <authorList>
            <person name="Ghaemmaghami S."/>
            <person name="Huh W.-K."/>
            <person name="Bower K."/>
            <person name="Howson R.W."/>
            <person name="Belle A."/>
            <person name="Dephoure N."/>
            <person name="O'Shea E.K."/>
            <person name="Weissman J.S."/>
        </authorList>
    </citation>
    <scope>LEVEL OF PROTEIN EXPRESSION [LARGE SCALE ANALYSIS]</scope>
</reference>
<reference key="7">
    <citation type="journal article" date="2003" name="Nature">
        <title>Targets of the cyclin-dependent kinase Cdk1.</title>
        <authorList>
            <person name="Ubersax J.A."/>
            <person name="Woodbury E.L."/>
            <person name="Quang P.N."/>
            <person name="Paraz M."/>
            <person name="Blethrow J.D."/>
            <person name="Shah K."/>
            <person name="Shokat K.M."/>
            <person name="Morgan D.O."/>
        </authorList>
    </citation>
    <scope>PHOSPHORYLATION BY CDC28</scope>
</reference>
<reference key="8">
    <citation type="journal article" date="2005" name="Yeast">
        <title>New weakly expressed cell cycle-regulated genes in yeast.</title>
        <authorList>
            <person name="de Lichtenberg U."/>
            <person name="Wernersson R."/>
            <person name="Jensen T.S."/>
            <person name="Nielsen H.B."/>
            <person name="Fausboell A."/>
            <person name="Schmidt P."/>
            <person name="Hansen F.B."/>
            <person name="Knudsen S."/>
            <person name="Brunak S."/>
        </authorList>
    </citation>
    <scope>INDUCTION</scope>
</reference>
<reference key="9">
    <citation type="journal article" date="2007" name="FEMS Microbiol. Lett.">
        <title>Overexpression of two transcriptional factors, Kin28 and Pog1, suppresses the stress sensitivity caused by the rsp5 mutation in Saccharomyces cerevisiae.</title>
        <authorList>
            <person name="Demae M."/>
            <person name="Murata Y."/>
            <person name="Hisano M."/>
            <person name="Haitani Y."/>
            <person name="Shima J."/>
            <person name="Takagi H."/>
        </authorList>
    </citation>
    <scope>FUNCTION</scope>
</reference>
<reference key="10">
    <citation type="journal article" date="2008" name="Mol. Cell. Proteomics">
        <title>A multidimensional chromatography technology for in-depth phosphoproteome analysis.</title>
        <authorList>
            <person name="Albuquerque C.P."/>
            <person name="Smolka M.B."/>
            <person name="Payne S.H."/>
            <person name="Bafna V."/>
            <person name="Eng J."/>
            <person name="Zhou H."/>
        </authorList>
    </citation>
    <scope>PHOSPHORYLATION [LARGE SCALE ANALYSIS] AT SER-152</scope>
    <scope>IDENTIFICATION BY MASS SPECTROMETRY [LARGE SCALE ANALYSIS]</scope>
</reference>
<reference key="11">
    <citation type="journal article" date="2009" name="Science">
        <title>Global analysis of Cdk1 substrate phosphorylation sites provides insights into evolution.</title>
        <authorList>
            <person name="Holt L.J."/>
            <person name="Tuch B.B."/>
            <person name="Villen J."/>
            <person name="Johnson A.D."/>
            <person name="Gygi S.P."/>
            <person name="Morgan D.O."/>
        </authorList>
    </citation>
    <scope>PHOSPHORYLATION [LARGE SCALE ANALYSIS] AT SER-168 AND SER-314</scope>
    <scope>IDENTIFICATION BY MASS SPECTROMETRY [LARGE SCALE ANALYSIS]</scope>
</reference>
<dbReference type="EMBL" id="Z46833">
    <property type="protein sequence ID" value="CAA86870.1"/>
    <property type="molecule type" value="Genomic_DNA"/>
</dbReference>
<dbReference type="EMBL" id="BK006942">
    <property type="protein sequence ID" value="DAA08431.1"/>
    <property type="molecule type" value="Genomic_DNA"/>
</dbReference>
<dbReference type="PIR" id="S49887">
    <property type="entry name" value="S49887"/>
</dbReference>
<dbReference type="RefSeq" id="NP_012144.1">
    <property type="nucleotide sequence ID" value="NM_001179470.1"/>
</dbReference>
<dbReference type="BioGRID" id="34869">
    <property type="interactions" value="116"/>
</dbReference>
<dbReference type="DIP" id="DIP-2755N"/>
<dbReference type="FunCoup" id="P40473">
    <property type="interactions" value="101"/>
</dbReference>
<dbReference type="IntAct" id="P40473">
    <property type="interactions" value="8"/>
</dbReference>
<dbReference type="MINT" id="P40473"/>
<dbReference type="STRING" id="4932.YIL122W"/>
<dbReference type="GlyGen" id="P40473">
    <property type="glycosylation" value="1 site, 1 O-linked glycan (1 site)"/>
</dbReference>
<dbReference type="iPTMnet" id="P40473"/>
<dbReference type="PaxDb" id="4932-YIL122W"/>
<dbReference type="PeptideAtlas" id="P40473"/>
<dbReference type="EnsemblFungi" id="YIL122W_mRNA">
    <property type="protein sequence ID" value="YIL122W"/>
    <property type="gene ID" value="YIL122W"/>
</dbReference>
<dbReference type="GeneID" id="854684"/>
<dbReference type="KEGG" id="sce:YIL122W"/>
<dbReference type="AGR" id="SGD:S000001384"/>
<dbReference type="SGD" id="S000001384">
    <property type="gene designation" value="POG1"/>
</dbReference>
<dbReference type="VEuPathDB" id="FungiDB:YIL122W"/>
<dbReference type="eggNOG" id="ENOG502S5H5">
    <property type="taxonomic scope" value="Eukaryota"/>
</dbReference>
<dbReference type="HOGENOM" id="CLU_792700_0_0_1"/>
<dbReference type="InParanoid" id="P40473"/>
<dbReference type="OMA" id="QNIGAHP"/>
<dbReference type="OrthoDB" id="4064025at2759"/>
<dbReference type="BioCyc" id="YEAST:G3O-31375-MONOMER"/>
<dbReference type="BioGRID-ORCS" id="854684">
    <property type="hits" value="0 hits in 10 CRISPR screens"/>
</dbReference>
<dbReference type="PRO" id="PR:P40473"/>
<dbReference type="Proteomes" id="UP000002311">
    <property type="component" value="Chromosome IX"/>
</dbReference>
<dbReference type="RNAct" id="P40473">
    <property type="molecule type" value="protein"/>
</dbReference>
<dbReference type="GO" id="GO:0000785">
    <property type="term" value="C:chromatin"/>
    <property type="evidence" value="ECO:0000314"/>
    <property type="project" value="SGD"/>
</dbReference>
<dbReference type="GO" id="GO:0005634">
    <property type="term" value="C:nucleus"/>
    <property type="evidence" value="ECO:0007005"/>
    <property type="project" value="SGD"/>
</dbReference>
<dbReference type="GO" id="GO:0000978">
    <property type="term" value="F:RNA polymerase II cis-regulatory region sequence-specific DNA binding"/>
    <property type="evidence" value="ECO:0000314"/>
    <property type="project" value="SGD"/>
</dbReference>
<dbReference type="GO" id="GO:0051301">
    <property type="term" value="P:cell division"/>
    <property type="evidence" value="ECO:0007669"/>
    <property type="project" value="UniProtKB-KW"/>
</dbReference>
<dbReference type="GO" id="GO:0045944">
    <property type="term" value="P:positive regulation of transcription by RNA polymerase II"/>
    <property type="evidence" value="ECO:0000315"/>
    <property type="project" value="SGD"/>
</dbReference>
<dbReference type="GO" id="GO:0000321">
    <property type="term" value="P:re-entry into mitotic cell cycle after pheromone arrest"/>
    <property type="evidence" value="ECO:0000315"/>
    <property type="project" value="SGD"/>
</dbReference>
<dbReference type="GO" id="GO:0030435">
    <property type="term" value="P:sporulation resulting in formation of a cellular spore"/>
    <property type="evidence" value="ECO:0000314"/>
    <property type="project" value="SGD"/>
</dbReference>